<protein>
    <recommendedName>
        <fullName>Ankyrin repeat and MYND domain-containing protein 2</fullName>
    </recommendedName>
</protein>
<reference key="1">
    <citation type="journal article" date="2005" name="Science">
        <title>The transcriptional landscape of the mammalian genome.</title>
        <authorList>
            <person name="Carninci P."/>
            <person name="Kasukawa T."/>
            <person name="Katayama S."/>
            <person name="Gough J."/>
            <person name="Frith M.C."/>
            <person name="Maeda N."/>
            <person name="Oyama R."/>
            <person name="Ravasi T."/>
            <person name="Lenhard B."/>
            <person name="Wells C."/>
            <person name="Kodzius R."/>
            <person name="Shimokawa K."/>
            <person name="Bajic V.B."/>
            <person name="Brenner S.E."/>
            <person name="Batalov S."/>
            <person name="Forrest A.R."/>
            <person name="Zavolan M."/>
            <person name="Davis M.J."/>
            <person name="Wilming L.G."/>
            <person name="Aidinis V."/>
            <person name="Allen J.E."/>
            <person name="Ambesi-Impiombato A."/>
            <person name="Apweiler R."/>
            <person name="Aturaliya R.N."/>
            <person name="Bailey T.L."/>
            <person name="Bansal M."/>
            <person name="Baxter L."/>
            <person name="Beisel K.W."/>
            <person name="Bersano T."/>
            <person name="Bono H."/>
            <person name="Chalk A.M."/>
            <person name="Chiu K.P."/>
            <person name="Choudhary V."/>
            <person name="Christoffels A."/>
            <person name="Clutterbuck D.R."/>
            <person name="Crowe M.L."/>
            <person name="Dalla E."/>
            <person name="Dalrymple B.P."/>
            <person name="de Bono B."/>
            <person name="Della Gatta G."/>
            <person name="di Bernardo D."/>
            <person name="Down T."/>
            <person name="Engstrom P."/>
            <person name="Fagiolini M."/>
            <person name="Faulkner G."/>
            <person name="Fletcher C.F."/>
            <person name="Fukushima T."/>
            <person name="Furuno M."/>
            <person name="Futaki S."/>
            <person name="Gariboldi M."/>
            <person name="Georgii-Hemming P."/>
            <person name="Gingeras T.R."/>
            <person name="Gojobori T."/>
            <person name="Green R.E."/>
            <person name="Gustincich S."/>
            <person name="Harbers M."/>
            <person name="Hayashi Y."/>
            <person name="Hensch T.K."/>
            <person name="Hirokawa N."/>
            <person name="Hill D."/>
            <person name="Huminiecki L."/>
            <person name="Iacono M."/>
            <person name="Ikeo K."/>
            <person name="Iwama A."/>
            <person name="Ishikawa T."/>
            <person name="Jakt M."/>
            <person name="Kanapin A."/>
            <person name="Katoh M."/>
            <person name="Kawasawa Y."/>
            <person name="Kelso J."/>
            <person name="Kitamura H."/>
            <person name="Kitano H."/>
            <person name="Kollias G."/>
            <person name="Krishnan S.P."/>
            <person name="Kruger A."/>
            <person name="Kummerfeld S.K."/>
            <person name="Kurochkin I.V."/>
            <person name="Lareau L.F."/>
            <person name="Lazarevic D."/>
            <person name="Lipovich L."/>
            <person name="Liu J."/>
            <person name="Liuni S."/>
            <person name="McWilliam S."/>
            <person name="Madan Babu M."/>
            <person name="Madera M."/>
            <person name="Marchionni L."/>
            <person name="Matsuda H."/>
            <person name="Matsuzawa S."/>
            <person name="Miki H."/>
            <person name="Mignone F."/>
            <person name="Miyake S."/>
            <person name="Morris K."/>
            <person name="Mottagui-Tabar S."/>
            <person name="Mulder N."/>
            <person name="Nakano N."/>
            <person name="Nakauchi H."/>
            <person name="Ng P."/>
            <person name="Nilsson R."/>
            <person name="Nishiguchi S."/>
            <person name="Nishikawa S."/>
            <person name="Nori F."/>
            <person name="Ohara O."/>
            <person name="Okazaki Y."/>
            <person name="Orlando V."/>
            <person name="Pang K.C."/>
            <person name="Pavan W.J."/>
            <person name="Pavesi G."/>
            <person name="Pesole G."/>
            <person name="Petrovsky N."/>
            <person name="Piazza S."/>
            <person name="Reed J."/>
            <person name="Reid J.F."/>
            <person name="Ring B.Z."/>
            <person name="Ringwald M."/>
            <person name="Rost B."/>
            <person name="Ruan Y."/>
            <person name="Salzberg S.L."/>
            <person name="Sandelin A."/>
            <person name="Schneider C."/>
            <person name="Schoenbach C."/>
            <person name="Sekiguchi K."/>
            <person name="Semple C.A."/>
            <person name="Seno S."/>
            <person name="Sessa L."/>
            <person name="Sheng Y."/>
            <person name="Shibata Y."/>
            <person name="Shimada H."/>
            <person name="Shimada K."/>
            <person name="Silva D."/>
            <person name="Sinclair B."/>
            <person name="Sperling S."/>
            <person name="Stupka E."/>
            <person name="Sugiura K."/>
            <person name="Sultana R."/>
            <person name="Takenaka Y."/>
            <person name="Taki K."/>
            <person name="Tammoja K."/>
            <person name="Tan S.L."/>
            <person name="Tang S."/>
            <person name="Taylor M.S."/>
            <person name="Tegner J."/>
            <person name="Teichmann S.A."/>
            <person name="Ueda H.R."/>
            <person name="van Nimwegen E."/>
            <person name="Verardo R."/>
            <person name="Wei C.L."/>
            <person name="Yagi K."/>
            <person name="Yamanishi H."/>
            <person name="Zabarovsky E."/>
            <person name="Zhu S."/>
            <person name="Zimmer A."/>
            <person name="Hide W."/>
            <person name="Bult C."/>
            <person name="Grimmond S.M."/>
            <person name="Teasdale R.D."/>
            <person name="Liu E.T."/>
            <person name="Brusic V."/>
            <person name="Quackenbush J."/>
            <person name="Wahlestedt C."/>
            <person name="Mattick J.S."/>
            <person name="Hume D.A."/>
            <person name="Kai C."/>
            <person name="Sasaki D."/>
            <person name="Tomaru Y."/>
            <person name="Fukuda S."/>
            <person name="Kanamori-Katayama M."/>
            <person name="Suzuki M."/>
            <person name="Aoki J."/>
            <person name="Arakawa T."/>
            <person name="Iida J."/>
            <person name="Imamura K."/>
            <person name="Itoh M."/>
            <person name="Kato T."/>
            <person name="Kawaji H."/>
            <person name="Kawagashira N."/>
            <person name="Kawashima T."/>
            <person name="Kojima M."/>
            <person name="Kondo S."/>
            <person name="Konno H."/>
            <person name="Nakano K."/>
            <person name="Ninomiya N."/>
            <person name="Nishio T."/>
            <person name="Okada M."/>
            <person name="Plessy C."/>
            <person name="Shibata K."/>
            <person name="Shiraki T."/>
            <person name="Suzuki S."/>
            <person name="Tagami M."/>
            <person name="Waki K."/>
            <person name="Watahiki A."/>
            <person name="Okamura-Oho Y."/>
            <person name="Suzuki H."/>
            <person name="Kawai J."/>
            <person name="Hayashizaki Y."/>
        </authorList>
    </citation>
    <scope>NUCLEOTIDE SEQUENCE [LARGE SCALE MRNA] (ISOFORM 1)</scope>
    <source>
        <strain>C57BL/6J</strain>
        <tissue>Thymus</tissue>
    </source>
</reference>
<reference key="2">
    <citation type="journal article" date="2004" name="Genome Res.">
        <title>The status, quality, and expansion of the NIH full-length cDNA project: the Mammalian Gene Collection (MGC).</title>
        <authorList>
            <consortium name="The MGC Project Team"/>
        </authorList>
    </citation>
    <scope>NUCLEOTIDE SEQUENCE [LARGE SCALE MRNA] (ISOFORMS 1 AND 2)</scope>
    <source>
        <strain>FVB/N</strain>
        <tissue>Mammary gland</tissue>
    </source>
</reference>
<reference key="3">
    <citation type="journal article" date="2010" name="Cell">
        <title>A tissue-specific atlas of mouse protein phosphorylation and expression.</title>
        <authorList>
            <person name="Huttlin E.L."/>
            <person name="Jedrychowski M.P."/>
            <person name="Elias J.E."/>
            <person name="Goswami T."/>
            <person name="Rad R."/>
            <person name="Beausoleil S.A."/>
            <person name="Villen J."/>
            <person name="Haas W."/>
            <person name="Sowa M.E."/>
            <person name="Gygi S.P."/>
        </authorList>
    </citation>
    <scope>IDENTIFICATION BY MASS SPECTROMETRY [LARGE SCALE ANALYSIS]</scope>
    <source>
        <tissue>Spleen</tissue>
    </source>
</reference>
<reference key="4">
    <citation type="journal article" date="2010" name="PLoS Genet.">
        <title>Localization of a guanylyl cyclase to chemosensory cilia requires the novel ciliary MYND domain protein DAF-25.</title>
        <authorList>
            <person name="Jensen V.L."/>
            <person name="Bialas N.J."/>
            <person name="Bishop-Hurley S.L."/>
            <person name="Molday L.L."/>
            <person name="Kida K."/>
            <person name="Nguyen P.A."/>
            <person name="Blacque O.E."/>
            <person name="Molday R.S."/>
            <person name="Leroux M.R."/>
            <person name="Riddle D.L."/>
        </authorList>
    </citation>
    <scope>INTERACTION WITH GC1</scope>
</reference>
<name>ANKY2_MOUSE</name>
<evidence type="ECO:0000250" key="1"/>
<evidence type="ECO:0000255" key="2">
    <source>
        <dbReference type="PROSITE-ProRule" id="PRU00134"/>
    </source>
</evidence>
<evidence type="ECO:0000256" key="3">
    <source>
        <dbReference type="SAM" id="MobiDB-lite"/>
    </source>
</evidence>
<evidence type="ECO:0000269" key="4">
    <source>
    </source>
</evidence>
<evidence type="ECO:0000303" key="5">
    <source>
    </source>
</evidence>
<evidence type="ECO:0000305" key="6"/>
<dbReference type="EMBL" id="AK037644">
    <property type="protein sequence ID" value="BAC29839.1"/>
    <property type="status" value="ALT_FRAME"/>
    <property type="molecule type" value="mRNA"/>
</dbReference>
<dbReference type="EMBL" id="AK077556">
    <property type="protein sequence ID" value="BAC36860.1"/>
    <property type="molecule type" value="mRNA"/>
</dbReference>
<dbReference type="EMBL" id="AK164434">
    <property type="protein sequence ID" value="BAE37787.1"/>
    <property type="molecule type" value="mRNA"/>
</dbReference>
<dbReference type="EMBL" id="BC012275">
    <property type="protein sequence ID" value="AAH12275.1"/>
    <property type="molecule type" value="mRNA"/>
</dbReference>
<dbReference type="EMBL" id="BC024959">
    <property type="protein sequence ID" value="AAH24959.1"/>
    <property type="molecule type" value="mRNA"/>
</dbReference>
<dbReference type="CCDS" id="CCDS25885.1">
    <molecule id="Q3TPE9-1"/>
</dbReference>
<dbReference type="RefSeq" id="NP_666145.3">
    <molecule id="Q3TPE9-1"/>
    <property type="nucleotide sequence ID" value="NM_146033.3"/>
</dbReference>
<dbReference type="SMR" id="Q3TPE9"/>
<dbReference type="BioGRID" id="229918">
    <property type="interactions" value="5"/>
</dbReference>
<dbReference type="FunCoup" id="Q3TPE9">
    <property type="interactions" value="429"/>
</dbReference>
<dbReference type="IntAct" id="Q3TPE9">
    <property type="interactions" value="1"/>
</dbReference>
<dbReference type="STRING" id="10090.ENSMUSP00000039484"/>
<dbReference type="iPTMnet" id="Q3TPE9"/>
<dbReference type="PhosphoSitePlus" id="Q3TPE9"/>
<dbReference type="PaxDb" id="10090-ENSMUSP00000039484"/>
<dbReference type="PeptideAtlas" id="Q3TPE9"/>
<dbReference type="ProteomicsDB" id="296247">
    <molecule id="Q3TPE9-1"/>
</dbReference>
<dbReference type="ProteomicsDB" id="296248">
    <molecule id="Q3TPE9-2"/>
</dbReference>
<dbReference type="Pumba" id="Q3TPE9"/>
<dbReference type="Antibodypedia" id="43960">
    <property type="antibodies" value="192 antibodies from 19 providers"/>
</dbReference>
<dbReference type="DNASU" id="217473"/>
<dbReference type="Ensembl" id="ENSMUST00000041640.5">
    <molecule id="Q3TPE9-1"/>
    <property type="protein sequence ID" value="ENSMUSP00000039484.4"/>
    <property type="gene ID" value="ENSMUSG00000036188.5"/>
</dbReference>
<dbReference type="GeneID" id="217473"/>
<dbReference type="KEGG" id="mmu:217473"/>
<dbReference type="UCSC" id="uc007njs.2">
    <molecule id="Q3TPE9-2"/>
    <property type="organism name" value="mouse"/>
</dbReference>
<dbReference type="UCSC" id="uc007njt.2">
    <molecule id="Q3TPE9-1"/>
    <property type="organism name" value="mouse"/>
</dbReference>
<dbReference type="AGR" id="MGI:2144755"/>
<dbReference type="CTD" id="57037"/>
<dbReference type="MGI" id="MGI:2144755">
    <property type="gene designation" value="Ankmy2"/>
</dbReference>
<dbReference type="VEuPathDB" id="HostDB:ENSMUSG00000036188"/>
<dbReference type="eggNOG" id="KOG1710">
    <property type="taxonomic scope" value="Eukaryota"/>
</dbReference>
<dbReference type="GeneTree" id="ENSGT00390000016820"/>
<dbReference type="HOGENOM" id="CLU_048951_0_0_1"/>
<dbReference type="InParanoid" id="Q3TPE9"/>
<dbReference type="OMA" id="EFPFREC"/>
<dbReference type="OrthoDB" id="10257049at2759"/>
<dbReference type="PhylomeDB" id="Q3TPE9"/>
<dbReference type="TreeFam" id="TF351374"/>
<dbReference type="BioGRID-ORCS" id="217473">
    <property type="hits" value="5 hits in 79 CRISPR screens"/>
</dbReference>
<dbReference type="ChiTaRS" id="Ankmy2">
    <property type="organism name" value="mouse"/>
</dbReference>
<dbReference type="PRO" id="PR:Q3TPE9"/>
<dbReference type="Proteomes" id="UP000000589">
    <property type="component" value="Chromosome 12"/>
</dbReference>
<dbReference type="RNAct" id="Q3TPE9">
    <property type="molecule type" value="protein"/>
</dbReference>
<dbReference type="Bgee" id="ENSMUSG00000036188">
    <property type="expression patterns" value="Expressed in ascending aorta and 249 other cell types or tissues"/>
</dbReference>
<dbReference type="GO" id="GO:0005929">
    <property type="term" value="C:cilium"/>
    <property type="evidence" value="ECO:0007669"/>
    <property type="project" value="UniProtKB-SubCell"/>
</dbReference>
<dbReference type="GO" id="GO:0019899">
    <property type="term" value="F:enzyme binding"/>
    <property type="evidence" value="ECO:0000353"/>
    <property type="project" value="UniProtKB"/>
</dbReference>
<dbReference type="GO" id="GO:0008270">
    <property type="term" value="F:zinc ion binding"/>
    <property type="evidence" value="ECO:0007669"/>
    <property type="project" value="UniProtKB-KW"/>
</dbReference>
<dbReference type="FunFam" id="1.25.40.20:FF:000182">
    <property type="entry name" value="Ankyrin repeat and MYND domain containing 2a"/>
    <property type="match status" value="1"/>
</dbReference>
<dbReference type="FunFam" id="6.10.140.2220:FF:000010">
    <property type="entry name" value="Ankyrin repeat and MYND domain-containing protein 2"/>
    <property type="match status" value="1"/>
</dbReference>
<dbReference type="Gene3D" id="6.10.140.2220">
    <property type="match status" value="1"/>
</dbReference>
<dbReference type="Gene3D" id="1.25.40.20">
    <property type="entry name" value="Ankyrin repeat-containing domain"/>
    <property type="match status" value="1"/>
</dbReference>
<dbReference type="InterPro" id="IPR052452">
    <property type="entry name" value="Ankyrin-MYND_dom_contain_2"/>
</dbReference>
<dbReference type="InterPro" id="IPR002110">
    <property type="entry name" value="Ankyrin_rpt"/>
</dbReference>
<dbReference type="InterPro" id="IPR036770">
    <property type="entry name" value="Ankyrin_rpt-contain_sf"/>
</dbReference>
<dbReference type="InterPro" id="IPR002893">
    <property type="entry name" value="Znf_MYND"/>
</dbReference>
<dbReference type="PANTHER" id="PTHR24150">
    <property type="entry name" value="ANKYRIN REPEAT AND MYND DOMAIN-CONTAINING PROTEIN 2"/>
    <property type="match status" value="1"/>
</dbReference>
<dbReference type="PANTHER" id="PTHR24150:SF8">
    <property type="entry name" value="ANKYRIN REPEAT AND MYND DOMAIN-CONTAINING PROTEIN 2"/>
    <property type="match status" value="1"/>
</dbReference>
<dbReference type="Pfam" id="PF12796">
    <property type="entry name" value="Ank_2"/>
    <property type="match status" value="1"/>
</dbReference>
<dbReference type="Pfam" id="PF01753">
    <property type="entry name" value="zf-MYND"/>
    <property type="match status" value="1"/>
</dbReference>
<dbReference type="SMART" id="SM00248">
    <property type="entry name" value="ANK"/>
    <property type="match status" value="3"/>
</dbReference>
<dbReference type="SUPFAM" id="SSF48403">
    <property type="entry name" value="Ankyrin repeat"/>
    <property type="match status" value="1"/>
</dbReference>
<dbReference type="SUPFAM" id="SSF144232">
    <property type="entry name" value="HIT/MYND zinc finger-like"/>
    <property type="match status" value="1"/>
</dbReference>
<dbReference type="PROSITE" id="PS50297">
    <property type="entry name" value="ANK_REP_REGION"/>
    <property type="match status" value="1"/>
</dbReference>
<dbReference type="PROSITE" id="PS50088">
    <property type="entry name" value="ANK_REPEAT"/>
    <property type="match status" value="2"/>
</dbReference>
<dbReference type="PROSITE" id="PS01360">
    <property type="entry name" value="ZF_MYND_1"/>
    <property type="match status" value="1"/>
</dbReference>
<dbReference type="PROSITE" id="PS50865">
    <property type="entry name" value="ZF_MYND_2"/>
    <property type="match status" value="1"/>
</dbReference>
<comment type="function">
    <text evidence="1">May be involved in the trafficking of signaling proteins to the cilia.</text>
</comment>
<comment type="subunit">
    <text evidence="4">Interacts with the retinal-specific guanylyl cyclase GC1.</text>
</comment>
<comment type="subcellular location">
    <subcellularLocation>
        <location evidence="1">Cell projection</location>
        <location evidence="1">Cilium</location>
    </subcellularLocation>
</comment>
<comment type="alternative products">
    <event type="alternative splicing"/>
    <isoform>
        <id>Q3TPE9-1</id>
        <name>1</name>
        <sequence type="displayed"/>
    </isoform>
    <isoform>
        <id>Q3TPE9-2</id>
        <name>2</name>
        <sequence type="described" ref="VSP_019937 VSP_019938"/>
    </isoform>
</comment>
<comment type="sequence caution" evidence="6">
    <conflict type="frameshift">
        <sequence resource="EMBL-CDS" id="BAC29839"/>
    </conflict>
</comment>
<gene>
    <name type="primary">Ankmy2</name>
</gene>
<accession>Q3TPE9</accession>
<accession>Q8BK14</accession>
<accession>Q8BYW5</accession>
<accession>Q8R3N4</accession>
<accession>Q921J1</accession>
<keyword id="KW-0025">Alternative splicing</keyword>
<keyword id="KW-0040">ANK repeat</keyword>
<keyword id="KW-0966">Cell projection</keyword>
<keyword id="KW-0969">Cilium</keyword>
<keyword id="KW-0479">Metal-binding</keyword>
<keyword id="KW-1185">Reference proteome</keyword>
<keyword id="KW-0677">Repeat</keyword>
<keyword id="KW-0862">Zinc</keyword>
<keyword id="KW-0863">Zinc-finger</keyword>
<proteinExistence type="evidence at protein level"/>
<feature type="chain" id="PRO_0000247167" description="Ankyrin repeat and MYND domain-containing protein 2">
    <location>
        <begin position="1"/>
        <end position="440"/>
    </location>
</feature>
<feature type="repeat" description="ANK 1">
    <location>
        <begin position="45"/>
        <end position="74"/>
    </location>
</feature>
<feature type="repeat" description="ANK 2">
    <location>
        <begin position="79"/>
        <end position="108"/>
    </location>
</feature>
<feature type="repeat" description="ANK 3">
    <location>
        <begin position="159"/>
        <end position="188"/>
    </location>
</feature>
<feature type="zinc finger region" description="MYND-type" evidence="2">
    <location>
        <begin position="320"/>
        <end position="357"/>
    </location>
</feature>
<feature type="region of interest" description="Disordered" evidence="3">
    <location>
        <begin position="371"/>
        <end position="440"/>
    </location>
</feature>
<feature type="compositionally biased region" description="Basic and acidic residues" evidence="3">
    <location>
        <begin position="371"/>
        <end position="381"/>
    </location>
</feature>
<feature type="binding site" evidence="2">
    <location>
        <position position="320"/>
    </location>
    <ligand>
        <name>Zn(2+)</name>
        <dbReference type="ChEBI" id="CHEBI:29105"/>
        <label>1</label>
    </ligand>
</feature>
<feature type="binding site" evidence="2">
    <location>
        <position position="323"/>
    </location>
    <ligand>
        <name>Zn(2+)</name>
        <dbReference type="ChEBI" id="CHEBI:29105"/>
        <label>1</label>
    </ligand>
</feature>
<feature type="binding site" evidence="2">
    <location>
        <position position="332"/>
    </location>
    <ligand>
        <name>Zn(2+)</name>
        <dbReference type="ChEBI" id="CHEBI:29105"/>
        <label>2</label>
    </ligand>
</feature>
<feature type="binding site" evidence="2">
    <location>
        <position position="335"/>
    </location>
    <ligand>
        <name>Zn(2+)</name>
        <dbReference type="ChEBI" id="CHEBI:29105"/>
        <label>2</label>
    </ligand>
</feature>
<feature type="binding site" evidence="2">
    <location>
        <position position="341"/>
    </location>
    <ligand>
        <name>Zn(2+)</name>
        <dbReference type="ChEBI" id="CHEBI:29105"/>
        <label>1</label>
    </ligand>
</feature>
<feature type="binding site" evidence="2">
    <location>
        <position position="345"/>
    </location>
    <ligand>
        <name>Zn(2+)</name>
        <dbReference type="ChEBI" id="CHEBI:29105"/>
        <label>1</label>
    </ligand>
</feature>
<feature type="binding site" evidence="2">
    <location>
        <position position="353"/>
    </location>
    <ligand>
        <name>Zn(2+)</name>
        <dbReference type="ChEBI" id="CHEBI:29105"/>
        <label>2</label>
    </ligand>
</feature>
<feature type="binding site" evidence="2">
    <location>
        <position position="357"/>
    </location>
    <ligand>
        <name>Zn(2+)</name>
        <dbReference type="ChEBI" id="CHEBI:29105"/>
        <label>2</label>
    </ligand>
</feature>
<feature type="splice variant" id="VSP_019937" description="In isoform 2." evidence="5">
    <original>GSDPTA</original>
    <variation>VRLLFC</variation>
    <location>
        <begin position="295"/>
        <end position="300"/>
    </location>
</feature>
<feature type="splice variant" id="VSP_019938" description="In isoform 2." evidence="5">
    <location>
        <begin position="301"/>
        <end position="440"/>
    </location>
</feature>
<feature type="sequence conflict" description="In Ref. 1; BAC36860." evidence="6" ref="1">
    <original>L</original>
    <variation>Q</variation>
    <location>
        <position position="156"/>
    </location>
</feature>
<feature type="sequence conflict" description="In Ref. 2; AAH24959." evidence="6" ref="2">
    <original>C</original>
    <variation>G</variation>
    <location>
        <position position="357"/>
    </location>
</feature>
<sequence>MGHIKKGELTQEEKELLEVIGKGTVQEAGRLLSSKNVHVNCLDENGMTPLMHAAYKGKLEMCKLLLRHGADASCHQHEHGYTALMFAALSGNKDITWVMLEAGAETDVVNSVGRTAAQMAAFVGQHDCVAIINNFFPRERLDYYTKPQGLDKEPKLPPKLAGPLHKIITTTNLHPVKIVMLVSENPLLADAAALGKCYRVMDLICEKCMKQRDMNEVLAMKMHYISCIFQKCITFLKEGENKLDTLIRSLLKGRASDGFPVYQEKIIRESIRKFPYCEATLLQQLVRSIAPVEIGSDPTAFSVLTQAITGQVGFVDVEFCTTCGEKGASKRCSVCKMVIYCDQTCQKTHWFAHKKMCKSLKDVYEKQQIEAAKHKRQEEKNGNPNVSSNHVNEDQPEAEEGITQENSIPSDSVEGEKEAANDTGLASAQDAPTGPQLSEE</sequence>
<organism>
    <name type="scientific">Mus musculus</name>
    <name type="common">Mouse</name>
    <dbReference type="NCBI Taxonomy" id="10090"/>
    <lineage>
        <taxon>Eukaryota</taxon>
        <taxon>Metazoa</taxon>
        <taxon>Chordata</taxon>
        <taxon>Craniata</taxon>
        <taxon>Vertebrata</taxon>
        <taxon>Euteleostomi</taxon>
        <taxon>Mammalia</taxon>
        <taxon>Eutheria</taxon>
        <taxon>Euarchontoglires</taxon>
        <taxon>Glires</taxon>
        <taxon>Rodentia</taxon>
        <taxon>Myomorpha</taxon>
        <taxon>Muroidea</taxon>
        <taxon>Muridae</taxon>
        <taxon>Murinae</taxon>
        <taxon>Mus</taxon>
        <taxon>Mus</taxon>
    </lineage>
</organism>